<gene>
    <name evidence="1" type="primary">tusA</name>
    <name type="ordered locus">Swoo_0017</name>
</gene>
<evidence type="ECO:0000255" key="1">
    <source>
        <dbReference type="HAMAP-Rule" id="MF_00413"/>
    </source>
</evidence>
<name>TUSA_SHEWM</name>
<reference key="1">
    <citation type="submission" date="2008-02" db="EMBL/GenBank/DDBJ databases">
        <title>Complete sequence of Shewanella woodyi ATCC 51908.</title>
        <authorList>
            <consortium name="US DOE Joint Genome Institute"/>
            <person name="Copeland A."/>
            <person name="Lucas S."/>
            <person name="Lapidus A."/>
            <person name="Glavina del Rio T."/>
            <person name="Dalin E."/>
            <person name="Tice H."/>
            <person name="Bruce D."/>
            <person name="Goodwin L."/>
            <person name="Pitluck S."/>
            <person name="Sims D."/>
            <person name="Brettin T."/>
            <person name="Detter J.C."/>
            <person name="Han C."/>
            <person name="Kuske C.R."/>
            <person name="Schmutz J."/>
            <person name="Larimer F."/>
            <person name="Land M."/>
            <person name="Hauser L."/>
            <person name="Kyrpides N."/>
            <person name="Lykidis A."/>
            <person name="Zhao J.-S."/>
            <person name="Richardson P."/>
        </authorList>
    </citation>
    <scope>NUCLEOTIDE SEQUENCE [LARGE SCALE GENOMIC DNA]</scope>
    <source>
        <strain>ATCC 51908 / MS32</strain>
    </source>
</reference>
<feature type="chain" id="PRO_1000199933" description="Sulfur carrier protein TusA">
    <location>
        <begin position="1"/>
        <end position="81"/>
    </location>
</feature>
<feature type="active site" description="Cysteine persulfide intermediate" evidence="1">
    <location>
        <position position="19"/>
    </location>
</feature>
<proteinExistence type="inferred from homology"/>
<keyword id="KW-0963">Cytoplasm</keyword>
<keyword id="KW-1185">Reference proteome</keyword>
<comment type="function">
    <text evidence="1">Sulfur carrier protein which probably makes part of a sulfur-relay system.</text>
</comment>
<comment type="subcellular location">
    <subcellularLocation>
        <location evidence="1">Cytoplasm</location>
    </subcellularLocation>
</comment>
<comment type="similarity">
    <text evidence="1">Belongs to the sulfur carrier protein TusA family.</text>
</comment>
<sequence>MSNQFSEAQHQLDALGLRCPEPVMMVRKSVRKMAQGETLLIIADDPATTRDIPSFCEFMDHKLLASQTETTPYQYLIQKGL</sequence>
<accession>B1KCY7</accession>
<dbReference type="EMBL" id="CP000961">
    <property type="protein sequence ID" value="ACA84318.1"/>
    <property type="molecule type" value="Genomic_DNA"/>
</dbReference>
<dbReference type="RefSeq" id="WP_012322667.1">
    <property type="nucleotide sequence ID" value="NC_010506.1"/>
</dbReference>
<dbReference type="SMR" id="B1KCY7"/>
<dbReference type="STRING" id="392500.Swoo_0017"/>
<dbReference type="KEGG" id="swd:Swoo_0017"/>
<dbReference type="eggNOG" id="COG0425">
    <property type="taxonomic scope" value="Bacteria"/>
</dbReference>
<dbReference type="HOGENOM" id="CLU_165255_5_0_6"/>
<dbReference type="Proteomes" id="UP000002168">
    <property type="component" value="Chromosome"/>
</dbReference>
<dbReference type="GO" id="GO:0005737">
    <property type="term" value="C:cytoplasm"/>
    <property type="evidence" value="ECO:0007669"/>
    <property type="project" value="UniProtKB-SubCell"/>
</dbReference>
<dbReference type="GO" id="GO:0097163">
    <property type="term" value="F:sulfur carrier activity"/>
    <property type="evidence" value="ECO:0007669"/>
    <property type="project" value="UniProtKB-UniRule"/>
</dbReference>
<dbReference type="GO" id="GO:0002143">
    <property type="term" value="P:tRNA wobble position uridine thiolation"/>
    <property type="evidence" value="ECO:0007669"/>
    <property type="project" value="InterPro"/>
</dbReference>
<dbReference type="CDD" id="cd03423">
    <property type="entry name" value="SirA"/>
    <property type="match status" value="1"/>
</dbReference>
<dbReference type="Gene3D" id="3.30.110.40">
    <property type="entry name" value="TusA-like domain"/>
    <property type="match status" value="1"/>
</dbReference>
<dbReference type="HAMAP" id="MF_00413">
    <property type="entry name" value="Thiourid_synth_A"/>
    <property type="match status" value="1"/>
</dbReference>
<dbReference type="InterPro" id="IPR022931">
    <property type="entry name" value="Sulphur_carrier_TusA"/>
</dbReference>
<dbReference type="InterPro" id="IPR001455">
    <property type="entry name" value="TusA-like"/>
</dbReference>
<dbReference type="InterPro" id="IPR036868">
    <property type="entry name" value="TusA-like_sf"/>
</dbReference>
<dbReference type="NCBIfam" id="NF001423">
    <property type="entry name" value="PRK00299.1"/>
    <property type="match status" value="1"/>
</dbReference>
<dbReference type="PANTHER" id="PTHR33279:SF2">
    <property type="entry name" value="SULFUR CARRIER PROTEIN TUSA"/>
    <property type="match status" value="1"/>
</dbReference>
<dbReference type="PANTHER" id="PTHR33279">
    <property type="entry name" value="SULFUR CARRIER PROTEIN YEDF-RELATED"/>
    <property type="match status" value="1"/>
</dbReference>
<dbReference type="Pfam" id="PF01206">
    <property type="entry name" value="TusA"/>
    <property type="match status" value="1"/>
</dbReference>
<dbReference type="SUPFAM" id="SSF64307">
    <property type="entry name" value="SirA-like"/>
    <property type="match status" value="1"/>
</dbReference>
<dbReference type="PROSITE" id="PS01148">
    <property type="entry name" value="UPF0033"/>
    <property type="match status" value="1"/>
</dbReference>
<protein>
    <recommendedName>
        <fullName evidence="1">Sulfur carrier protein TusA</fullName>
    </recommendedName>
</protein>
<organism>
    <name type="scientific">Shewanella woodyi (strain ATCC 51908 / MS32)</name>
    <dbReference type="NCBI Taxonomy" id="392500"/>
    <lineage>
        <taxon>Bacteria</taxon>
        <taxon>Pseudomonadati</taxon>
        <taxon>Pseudomonadota</taxon>
        <taxon>Gammaproteobacteria</taxon>
        <taxon>Alteromonadales</taxon>
        <taxon>Shewanellaceae</taxon>
        <taxon>Shewanella</taxon>
    </lineage>
</organism>